<feature type="chain" id="PRO_0000294523" description="Differentially expressed in FDCP 6">
    <location>
        <begin position="1"/>
        <end position="630"/>
    </location>
</feature>
<feature type="domain" description="PH" evidence="3">
    <location>
        <begin position="216"/>
        <end position="312"/>
    </location>
</feature>
<feature type="region of interest" description="Disordered" evidence="4">
    <location>
        <begin position="318"/>
        <end position="341"/>
    </location>
</feature>
<feature type="region of interest" description="Disordered" evidence="4">
    <location>
        <begin position="378"/>
        <end position="418"/>
    </location>
</feature>
<feature type="region of interest" description="Disordered" evidence="4">
    <location>
        <begin position="552"/>
        <end position="630"/>
    </location>
</feature>
<feature type="compositionally biased region" description="Basic and acidic residues" evidence="4">
    <location>
        <begin position="331"/>
        <end position="341"/>
    </location>
</feature>
<feature type="compositionally biased region" description="Basic and acidic residues" evidence="4">
    <location>
        <begin position="378"/>
        <end position="392"/>
    </location>
</feature>
<feature type="compositionally biased region" description="Polar residues" evidence="4">
    <location>
        <begin position="588"/>
        <end position="606"/>
    </location>
</feature>
<feature type="compositionally biased region" description="Basic and acidic residues" evidence="4">
    <location>
        <begin position="620"/>
        <end position="630"/>
    </location>
</feature>
<feature type="modified residue" description="Phosphotyrosine" evidence="2">
    <location>
        <position position="210"/>
    </location>
</feature>
<feature type="modified residue" description="N6-acetyllysine" evidence="2">
    <location>
        <position position="225"/>
    </location>
</feature>
<feature type="modified residue" description="Phosphoserine" evidence="2">
    <location>
        <position position="590"/>
    </location>
</feature>
<feature type="splice variant" id="VSP_026671" description="In isoform 2." evidence="7">
    <location>
        <begin position="33"/>
        <end position="405"/>
    </location>
</feature>
<feature type="sequence conflict" description="In Ref. 3; BAE20528." evidence="8" ref="3">
    <original>P</original>
    <variation>T</variation>
    <location>
        <position position="48"/>
    </location>
</feature>
<feature type="sequence conflict" description="In Ref. 3; BAE20528." evidence="8" ref="3">
    <original>P</original>
    <variation>Q</variation>
    <location>
        <position position="134"/>
    </location>
</feature>
<feature type="sequence conflict" description="In Ref. 2; AAO91768, 3; BAE20528 and 4; AAI20501/AAI31954." evidence="8" ref="2 3 4">
    <original>E</original>
    <variation>K</variation>
    <location>
        <position position="161"/>
    </location>
</feature>
<feature type="sequence conflict" description="In Ref. 2; AAO91768." evidence="8" ref="2">
    <original>C</original>
    <variation>S</variation>
    <location>
        <position position="279"/>
    </location>
</feature>
<evidence type="ECO:0000250" key="1"/>
<evidence type="ECO:0000250" key="2">
    <source>
        <dbReference type="UniProtKB" id="Q9H4E7"/>
    </source>
</evidence>
<evidence type="ECO:0000255" key="3">
    <source>
        <dbReference type="PROSITE-ProRule" id="PRU00145"/>
    </source>
</evidence>
<evidence type="ECO:0000256" key="4">
    <source>
        <dbReference type="SAM" id="MobiDB-lite"/>
    </source>
</evidence>
<evidence type="ECO:0000269" key="5">
    <source>
    </source>
</evidence>
<evidence type="ECO:0000269" key="6">
    <source>
    </source>
</evidence>
<evidence type="ECO:0000303" key="7">
    <source>
    </source>
</evidence>
<evidence type="ECO:0000305" key="8"/>
<dbReference type="EMBL" id="AY278770">
    <property type="protein sequence ID" value="AAQ19048.1"/>
    <property type="molecule type" value="mRNA"/>
</dbReference>
<dbReference type="EMBL" id="AF329497">
    <property type="protein sequence ID" value="AAO67354.1"/>
    <property type="molecule type" value="mRNA"/>
</dbReference>
<dbReference type="EMBL" id="AY241695">
    <property type="protein sequence ID" value="AAO91768.1"/>
    <property type="molecule type" value="mRNA"/>
</dbReference>
<dbReference type="EMBL" id="AK010356">
    <property type="protein sequence ID" value="BAB26876.1"/>
    <property type="molecule type" value="mRNA"/>
</dbReference>
<dbReference type="EMBL" id="AK038050">
    <property type="protein sequence ID" value="BAE20528.1"/>
    <property type="molecule type" value="mRNA"/>
</dbReference>
<dbReference type="EMBL" id="AK088460">
    <property type="protein sequence ID" value="BAC40366.1"/>
    <property type="molecule type" value="mRNA"/>
</dbReference>
<dbReference type="EMBL" id="CT009658">
    <property type="status" value="NOT_ANNOTATED_CDS"/>
    <property type="molecule type" value="Genomic_DNA"/>
</dbReference>
<dbReference type="EMBL" id="BC120500">
    <property type="protein sequence ID" value="AAI20501.1"/>
    <property type="molecule type" value="mRNA"/>
</dbReference>
<dbReference type="EMBL" id="BC131953">
    <property type="protein sequence ID" value="AAI31954.1"/>
    <property type="molecule type" value="mRNA"/>
</dbReference>
<dbReference type="CCDS" id="CCDS28574.1">
    <molecule id="Q8C2K1-1"/>
</dbReference>
<dbReference type="RefSeq" id="NP_081461.2">
    <property type="nucleotide sequence ID" value="NM_027185.3"/>
</dbReference>
<dbReference type="SMR" id="Q8C2K1"/>
<dbReference type="BioGRID" id="204758">
    <property type="interactions" value="1"/>
</dbReference>
<dbReference type="FunCoup" id="Q8C2K1">
    <property type="interactions" value="1733"/>
</dbReference>
<dbReference type="IntAct" id="Q8C2K1">
    <property type="interactions" value="2"/>
</dbReference>
<dbReference type="STRING" id="10090.ENSMUSP00000002327"/>
<dbReference type="GlyGen" id="Q8C2K1">
    <property type="glycosylation" value="1 site, 1 O-linked glycan (1 site)"/>
</dbReference>
<dbReference type="iPTMnet" id="Q8C2K1"/>
<dbReference type="PhosphoSitePlus" id="Q8C2K1"/>
<dbReference type="jPOST" id="Q8C2K1"/>
<dbReference type="PaxDb" id="10090-ENSMUSP00000002327"/>
<dbReference type="PeptideAtlas" id="Q8C2K1"/>
<dbReference type="ProteomicsDB" id="277308">
    <molecule id="Q8C2K1-1"/>
</dbReference>
<dbReference type="ProteomicsDB" id="277309">
    <molecule id="Q8C2K1-2"/>
</dbReference>
<dbReference type="Pumba" id="Q8C2K1"/>
<dbReference type="Antibodypedia" id="29495">
    <property type="antibodies" value="407 antibodies from 31 providers"/>
</dbReference>
<dbReference type="DNASU" id="23853"/>
<dbReference type="Ensembl" id="ENSMUST00000233170.2">
    <molecule id="Q8C2K1-2"/>
    <property type="protein sequence ID" value="ENSMUSP00000156601.2"/>
    <property type="gene ID" value="ENSMUSG00000002257.9"/>
</dbReference>
<dbReference type="GeneID" id="23853"/>
<dbReference type="KEGG" id="mmu:23853"/>
<dbReference type="UCSC" id="uc008bqi.2">
    <molecule id="Q8C2K1-1"/>
    <property type="organism name" value="mouse"/>
</dbReference>
<dbReference type="UCSC" id="uc012aoe.1">
    <molecule id="Q8C2K1-2"/>
    <property type="organism name" value="mouse"/>
</dbReference>
<dbReference type="AGR" id="MGI:1346328"/>
<dbReference type="CTD" id="50619"/>
<dbReference type="MGI" id="MGI:1346328">
    <property type="gene designation" value="Def6"/>
</dbReference>
<dbReference type="VEuPathDB" id="HostDB:ENSMUSG00000002257"/>
<dbReference type="eggNOG" id="ENOG502QUWV">
    <property type="taxonomic scope" value="Eukaryota"/>
</dbReference>
<dbReference type="GeneTree" id="ENSGT00950000183017"/>
<dbReference type="InParanoid" id="Q8C2K1"/>
<dbReference type="OrthoDB" id="8434295at2759"/>
<dbReference type="PhylomeDB" id="Q8C2K1"/>
<dbReference type="TreeFam" id="TF333160"/>
<dbReference type="Reactome" id="R-MMU-8980692">
    <property type="pathway name" value="RHOA GTPase cycle"/>
</dbReference>
<dbReference type="Reactome" id="R-MMU-9013148">
    <property type="pathway name" value="CDC42 GTPase cycle"/>
</dbReference>
<dbReference type="Reactome" id="R-MMU-9013149">
    <property type="pathway name" value="RAC1 GTPase cycle"/>
</dbReference>
<dbReference type="Reactome" id="R-MMU-9013404">
    <property type="pathway name" value="RAC2 GTPase cycle"/>
</dbReference>
<dbReference type="BioGRID-ORCS" id="23853">
    <property type="hits" value="1 hit in 78 CRISPR screens"/>
</dbReference>
<dbReference type="ChiTaRS" id="Def6">
    <property type="organism name" value="mouse"/>
</dbReference>
<dbReference type="PRO" id="PR:Q8C2K1"/>
<dbReference type="Proteomes" id="UP000000589">
    <property type="component" value="Chromosome 17"/>
</dbReference>
<dbReference type="RNAct" id="Q8C2K1">
    <property type="molecule type" value="protein"/>
</dbReference>
<dbReference type="Bgee" id="ENSMUSG00000002257">
    <property type="expression patterns" value="Expressed in thymus and 161 other cell types or tissues"/>
</dbReference>
<dbReference type="ExpressionAtlas" id="Q8C2K1">
    <property type="expression patterns" value="baseline and differential"/>
</dbReference>
<dbReference type="GO" id="GO:0005911">
    <property type="term" value="C:cell-cell junction"/>
    <property type="evidence" value="ECO:0000314"/>
    <property type="project" value="MGI"/>
</dbReference>
<dbReference type="GO" id="GO:0005856">
    <property type="term" value="C:cytoskeleton"/>
    <property type="evidence" value="ECO:0007669"/>
    <property type="project" value="UniProtKB-SubCell"/>
</dbReference>
<dbReference type="GO" id="GO:0030175">
    <property type="term" value="C:filopodium"/>
    <property type="evidence" value="ECO:0007669"/>
    <property type="project" value="UniProtKB-SubCell"/>
</dbReference>
<dbReference type="GO" id="GO:0005634">
    <property type="term" value="C:nucleus"/>
    <property type="evidence" value="ECO:0007669"/>
    <property type="project" value="UniProtKB-SubCell"/>
</dbReference>
<dbReference type="GO" id="GO:0048471">
    <property type="term" value="C:perinuclear region of cytoplasm"/>
    <property type="evidence" value="ECO:0007669"/>
    <property type="project" value="UniProtKB-SubCell"/>
</dbReference>
<dbReference type="GO" id="GO:0005886">
    <property type="term" value="C:plasma membrane"/>
    <property type="evidence" value="ECO:0007669"/>
    <property type="project" value="UniProtKB-SubCell"/>
</dbReference>
<dbReference type="GO" id="GO:0098876">
    <property type="term" value="P:vesicle-mediated transport to the plasma membrane"/>
    <property type="evidence" value="ECO:0000250"/>
    <property type="project" value="UniProtKB"/>
</dbReference>
<dbReference type="CDD" id="cd13273">
    <property type="entry name" value="PH_SWAP-70"/>
    <property type="match status" value="1"/>
</dbReference>
<dbReference type="FunFam" id="2.30.29.30:FF:000172">
    <property type="entry name" value="differentially expressed in FDCP 6 homolog"/>
    <property type="match status" value="1"/>
</dbReference>
<dbReference type="Gene3D" id="2.30.29.30">
    <property type="entry name" value="Pleckstrin-homology domain (PH domain)/Phosphotyrosine-binding domain (PTB)"/>
    <property type="match status" value="1"/>
</dbReference>
<dbReference type="InterPro" id="IPR011992">
    <property type="entry name" value="EF-hand-dom_pair"/>
</dbReference>
<dbReference type="InterPro" id="IPR011993">
    <property type="entry name" value="PH-like_dom_sf"/>
</dbReference>
<dbReference type="InterPro" id="IPR001849">
    <property type="entry name" value="PH_domain"/>
</dbReference>
<dbReference type="PANTHER" id="PTHR14383:SF2">
    <property type="entry name" value="DIFFERENTIALLY EXPRESSED IN FDCP 6 HOMOLOG"/>
    <property type="match status" value="1"/>
</dbReference>
<dbReference type="PANTHER" id="PTHR14383">
    <property type="entry name" value="SWAP-70 RECOMBINASE"/>
    <property type="match status" value="1"/>
</dbReference>
<dbReference type="Pfam" id="PF00169">
    <property type="entry name" value="PH"/>
    <property type="match status" value="1"/>
</dbReference>
<dbReference type="SMART" id="SM00233">
    <property type="entry name" value="PH"/>
    <property type="match status" value="1"/>
</dbReference>
<dbReference type="SUPFAM" id="SSF47473">
    <property type="entry name" value="EF-hand"/>
    <property type="match status" value="1"/>
</dbReference>
<dbReference type="SUPFAM" id="SSF50729">
    <property type="entry name" value="PH domain-like"/>
    <property type="match status" value="1"/>
</dbReference>
<dbReference type="PROSITE" id="PS50003">
    <property type="entry name" value="PH_DOMAIN"/>
    <property type="match status" value="1"/>
</dbReference>
<gene>
    <name type="primary">Def6</name>
    <name type="synonym">Ibp</name>
    <name type="synonym">Slat</name>
</gene>
<sequence>MALRKELLKSIWYAFTALDVEKSGKVSKSQLKVLSHNLYTVLNIPHDPVALEEHFRDDDDGPVSSQGYMPYLNKYILDKVEEGAFVKEHFDELCWTLTAKKNYRADGIGSSPLSNQDAFRLWCLFNFLSEDKYPLIMVPDEVEYLLKKLLGSLSLEMGLGELEELLAQDAQSAQTAVGLSVWQFLELFNSGRCLRGVGRDSLSMAIQEVYQELIQDVLKQGYLWKRGHLRRNWAERWFQLQPSSLCYFGSEECKEKRGTIPLDAHCCVEVLPDREGKRCMFCVKTASRTYEMSASDTRQRQEWTAAIQTAIRLQAEGKTSLHKDLKQKRREQREQRERRRAAKEEELLRLQQLQEEKERKLQELELLQEAQRQAERLLQEEEERRRSQHKELQQALEGQLREAEQARASMQAEMELKKEEAARQRQRIAELEEMQERLQEALQLEVKARRDEEAVRLAQTRLLEEEEEKLKQLMHLKEEQERYIERAQQEKQELQQEMALQSRSLQHAQQQLEEVRQNRQRADEDVEAAQRKLRQASTNVKHWNVQMNRLMHPIEPGDKRPTTSSSFTGFQPPPLARRDSSLKRLTRWGSQGNRTLSVNSSEQKSLNGGDETPILALASQEEKLDPAPGN</sequence>
<name>DEFI6_MOUSE</name>
<keyword id="KW-0007">Acetylation</keyword>
<keyword id="KW-0025">Alternative splicing</keyword>
<keyword id="KW-1003">Cell membrane</keyword>
<keyword id="KW-0966">Cell projection</keyword>
<keyword id="KW-0963">Cytoplasm</keyword>
<keyword id="KW-0206">Cytoskeleton</keyword>
<keyword id="KW-0472">Membrane</keyword>
<keyword id="KW-0539">Nucleus</keyword>
<keyword id="KW-0597">Phosphoprotein</keyword>
<keyword id="KW-1185">Reference proteome</keyword>
<comment type="function">
    <text evidence="2 5 6">Phosphatidylinositol 3,4,5-trisphosphate-dependent guanine nucleotide exchange factor (GEF) which plays a role in the activation of Rho GTPases RAC1, RhoA and CDC42 (PubMed:12648457, PubMed:12923183). Can regulate cell morphology in cooperation with activated RAC1 (PubMed:12648457, PubMed:12923183). Involved in immune homeostasis by ensuring proper trafficking and availability of T-cell regulator CTLA-4 at T-cell surface (By similarity). Plays a role in Th2 (T helper cells) development and/or activation, perhaps by interfering with ZAP70 signaling. Required for optimal T-cell effector function, lymphocyte homeostasis and the prevention of systemic autoimmunity (By similarity).</text>
</comment>
<comment type="subunit">
    <text evidence="1 2 5">Interacts with IRF4, activated RAC1 and F-actin. Both the phosphorylated and non-phosphorylated forms bind phosphatidylinositol 3,4,5-trisphosphate (PtdInsP3) (By similarity). Interacts with ZAP70. Interacts with RAB11A (By similarity).</text>
</comment>
<comment type="interaction">
    <interactant intactId="EBI-2121188">
        <id>Q8C2K1</id>
    </interactant>
    <interactant intactId="EBI-1786329">
        <id>Q61738-6</id>
        <label>Itga7</label>
    </interactant>
    <organismsDiffer>false</organismsDiffer>
    <experiments>3</experiments>
</comment>
<comment type="subcellular location">
    <subcellularLocation>
        <location evidence="5">Cytoplasm</location>
    </subcellularLocation>
    <subcellularLocation>
        <location evidence="5">Cell membrane</location>
    </subcellularLocation>
    <subcellularLocation>
        <location evidence="2">Nucleus</location>
    </subcellularLocation>
    <subcellularLocation>
        <location evidence="2">Cytoplasm</location>
        <location evidence="2">Cytoskeleton</location>
    </subcellularLocation>
    <subcellularLocation>
        <location evidence="2">Cytoplasm</location>
        <location evidence="2">Perinuclear region</location>
    </subcellularLocation>
    <subcellularLocation>
        <location evidence="2">Cell projection</location>
        <location evidence="2">Filopodium</location>
    </subcellularLocation>
    <text evidence="2">Recruited to the plasma membrane upon binding phosphatidylinositol 3,4,5-trisphosphate. Binds to actin filaments.</text>
</comment>
<comment type="alternative products">
    <event type="alternative splicing"/>
    <isoform>
        <id>Q8C2K1-1</id>
        <name>1</name>
        <sequence type="displayed"/>
    </isoform>
    <isoform>
        <id>Q8C2K1-2</id>
        <name>2</name>
        <sequence type="described" ref="VSP_026671"/>
    </isoform>
</comment>
<comment type="tissue specificity">
    <text evidence="5">Thymus.</text>
</comment>
<comment type="induction">
    <text evidence="5">Up-regulated in differentiating Th2 cells and down-regulated in Th1 cells.</text>
</comment>
<comment type="domain">
    <text>The PH domain is essential for phosphatidylinositol 3,4,5-trisphosphate binding.</text>
</comment>
<comment type="PTM">
    <text evidence="1">Tyrosine-phosphorylated by tyrosine-protein kinase LCK in response to T-cell activation.</text>
</comment>
<comment type="disease">
    <text evidence="6">Defects in Def6 results in spontaneous development of a lupus-like syndrome in aging female mice. It is characterized by the accumulation of effector/memory T-cells and IgG B-cells, profound hypergammaglobulinemia, autoantibody production, and glomerulonephritis.</text>
</comment>
<reference key="1">
    <citation type="journal article" date="2003" name="Immunity">
        <title>SWAP-70-like adapter of T cells, an adapter protein that regulates early TCR-initiated signaling in Th2 lineage cells.</title>
        <authorList>
            <person name="Tanaka Y."/>
            <person name="Bi K."/>
            <person name="Kitamura R."/>
            <person name="Hong S."/>
            <person name="Altman Y."/>
            <person name="Matsumoto A."/>
            <person name="Tabata H."/>
            <person name="Lebedeva S."/>
            <person name="Bushway P.J."/>
            <person name="Altman A."/>
        </authorList>
    </citation>
    <scope>NUCLEOTIDE SEQUENCE [MRNA] (ISOFORMS 1 AND 2)</scope>
    <scope>FUNCTION</scope>
    <scope>SUBCELLULAR LOCATION</scope>
    <scope>INDUCTION</scope>
    <scope>INTERACTION WITH ZAP70</scope>
    <scope>TISSUE SPECIFICITY</scope>
    <source>
        <strain>B10.A</strain>
    </source>
</reference>
<reference key="2">
    <citation type="journal article" date="2003" name="Hum. Immunol.">
        <title>Molecular cloning of IBP, a SWAP-70 homologous GEF, which is highly expressed in the immune system.</title>
        <authorList>
            <person name="Gupta S."/>
            <person name="Lee A.E."/>
            <person name="Hu C."/>
            <person name="Fanzo J.C."/>
            <person name="Goldberg I."/>
            <person name="Cattoretti G."/>
            <person name="Pernis A.B."/>
        </authorList>
    </citation>
    <scope>NUCLEOTIDE SEQUENCE [MRNA] (ISOFORM 1)</scope>
    <source>
        <strain>C57BL/6J</strain>
        <tissue>Thymus</tissue>
    </source>
</reference>
<reference key="3">
    <citation type="journal article" date="2005" name="Science">
        <title>The transcriptional landscape of the mammalian genome.</title>
        <authorList>
            <person name="Carninci P."/>
            <person name="Kasukawa T."/>
            <person name="Katayama S."/>
            <person name="Gough J."/>
            <person name="Frith M.C."/>
            <person name="Maeda N."/>
            <person name="Oyama R."/>
            <person name="Ravasi T."/>
            <person name="Lenhard B."/>
            <person name="Wells C."/>
            <person name="Kodzius R."/>
            <person name="Shimokawa K."/>
            <person name="Bajic V.B."/>
            <person name="Brenner S.E."/>
            <person name="Batalov S."/>
            <person name="Forrest A.R."/>
            <person name="Zavolan M."/>
            <person name="Davis M.J."/>
            <person name="Wilming L.G."/>
            <person name="Aidinis V."/>
            <person name="Allen J.E."/>
            <person name="Ambesi-Impiombato A."/>
            <person name="Apweiler R."/>
            <person name="Aturaliya R.N."/>
            <person name="Bailey T.L."/>
            <person name="Bansal M."/>
            <person name="Baxter L."/>
            <person name="Beisel K.W."/>
            <person name="Bersano T."/>
            <person name="Bono H."/>
            <person name="Chalk A.M."/>
            <person name="Chiu K.P."/>
            <person name="Choudhary V."/>
            <person name="Christoffels A."/>
            <person name="Clutterbuck D.R."/>
            <person name="Crowe M.L."/>
            <person name="Dalla E."/>
            <person name="Dalrymple B.P."/>
            <person name="de Bono B."/>
            <person name="Della Gatta G."/>
            <person name="di Bernardo D."/>
            <person name="Down T."/>
            <person name="Engstrom P."/>
            <person name="Fagiolini M."/>
            <person name="Faulkner G."/>
            <person name="Fletcher C.F."/>
            <person name="Fukushima T."/>
            <person name="Furuno M."/>
            <person name="Futaki S."/>
            <person name="Gariboldi M."/>
            <person name="Georgii-Hemming P."/>
            <person name="Gingeras T.R."/>
            <person name="Gojobori T."/>
            <person name="Green R.E."/>
            <person name="Gustincich S."/>
            <person name="Harbers M."/>
            <person name="Hayashi Y."/>
            <person name="Hensch T.K."/>
            <person name="Hirokawa N."/>
            <person name="Hill D."/>
            <person name="Huminiecki L."/>
            <person name="Iacono M."/>
            <person name="Ikeo K."/>
            <person name="Iwama A."/>
            <person name="Ishikawa T."/>
            <person name="Jakt M."/>
            <person name="Kanapin A."/>
            <person name="Katoh M."/>
            <person name="Kawasawa Y."/>
            <person name="Kelso J."/>
            <person name="Kitamura H."/>
            <person name="Kitano H."/>
            <person name="Kollias G."/>
            <person name="Krishnan S.P."/>
            <person name="Kruger A."/>
            <person name="Kummerfeld S.K."/>
            <person name="Kurochkin I.V."/>
            <person name="Lareau L.F."/>
            <person name="Lazarevic D."/>
            <person name="Lipovich L."/>
            <person name="Liu J."/>
            <person name="Liuni S."/>
            <person name="McWilliam S."/>
            <person name="Madan Babu M."/>
            <person name="Madera M."/>
            <person name="Marchionni L."/>
            <person name="Matsuda H."/>
            <person name="Matsuzawa S."/>
            <person name="Miki H."/>
            <person name="Mignone F."/>
            <person name="Miyake S."/>
            <person name="Morris K."/>
            <person name="Mottagui-Tabar S."/>
            <person name="Mulder N."/>
            <person name="Nakano N."/>
            <person name="Nakauchi H."/>
            <person name="Ng P."/>
            <person name="Nilsson R."/>
            <person name="Nishiguchi S."/>
            <person name="Nishikawa S."/>
            <person name="Nori F."/>
            <person name="Ohara O."/>
            <person name="Okazaki Y."/>
            <person name="Orlando V."/>
            <person name="Pang K.C."/>
            <person name="Pavan W.J."/>
            <person name="Pavesi G."/>
            <person name="Pesole G."/>
            <person name="Petrovsky N."/>
            <person name="Piazza S."/>
            <person name="Reed J."/>
            <person name="Reid J.F."/>
            <person name="Ring B.Z."/>
            <person name="Ringwald M."/>
            <person name="Rost B."/>
            <person name="Ruan Y."/>
            <person name="Salzberg S.L."/>
            <person name="Sandelin A."/>
            <person name="Schneider C."/>
            <person name="Schoenbach C."/>
            <person name="Sekiguchi K."/>
            <person name="Semple C.A."/>
            <person name="Seno S."/>
            <person name="Sessa L."/>
            <person name="Sheng Y."/>
            <person name="Shibata Y."/>
            <person name="Shimada H."/>
            <person name="Shimada K."/>
            <person name="Silva D."/>
            <person name="Sinclair B."/>
            <person name="Sperling S."/>
            <person name="Stupka E."/>
            <person name="Sugiura K."/>
            <person name="Sultana R."/>
            <person name="Takenaka Y."/>
            <person name="Taki K."/>
            <person name="Tammoja K."/>
            <person name="Tan S.L."/>
            <person name="Tang S."/>
            <person name="Taylor M.S."/>
            <person name="Tegner J."/>
            <person name="Teichmann S.A."/>
            <person name="Ueda H.R."/>
            <person name="van Nimwegen E."/>
            <person name="Verardo R."/>
            <person name="Wei C.L."/>
            <person name="Yagi K."/>
            <person name="Yamanishi H."/>
            <person name="Zabarovsky E."/>
            <person name="Zhu S."/>
            <person name="Zimmer A."/>
            <person name="Hide W."/>
            <person name="Bult C."/>
            <person name="Grimmond S.M."/>
            <person name="Teasdale R.D."/>
            <person name="Liu E.T."/>
            <person name="Brusic V."/>
            <person name="Quackenbush J."/>
            <person name="Wahlestedt C."/>
            <person name="Mattick J.S."/>
            <person name="Hume D.A."/>
            <person name="Kai C."/>
            <person name="Sasaki D."/>
            <person name="Tomaru Y."/>
            <person name="Fukuda S."/>
            <person name="Kanamori-Katayama M."/>
            <person name="Suzuki M."/>
            <person name="Aoki J."/>
            <person name="Arakawa T."/>
            <person name="Iida J."/>
            <person name="Imamura K."/>
            <person name="Itoh M."/>
            <person name="Kato T."/>
            <person name="Kawaji H."/>
            <person name="Kawagashira N."/>
            <person name="Kawashima T."/>
            <person name="Kojima M."/>
            <person name="Kondo S."/>
            <person name="Konno H."/>
            <person name="Nakano K."/>
            <person name="Ninomiya N."/>
            <person name="Nishio T."/>
            <person name="Okada M."/>
            <person name="Plessy C."/>
            <person name="Shibata K."/>
            <person name="Shiraki T."/>
            <person name="Suzuki S."/>
            <person name="Tagami M."/>
            <person name="Waki K."/>
            <person name="Watahiki A."/>
            <person name="Okamura-Oho Y."/>
            <person name="Suzuki H."/>
            <person name="Kawai J."/>
            <person name="Hayashizaki Y."/>
        </authorList>
    </citation>
    <scope>NUCLEOTIDE SEQUENCE [LARGE SCALE MRNA] (ISOFORM 1)</scope>
    <source>
        <strain>C57BL/6J</strain>
        <strain>NOD</strain>
        <tissue>Thymus</tissue>
    </source>
</reference>
<reference key="4">
    <citation type="journal article" date="2009" name="PLoS Biol.">
        <title>Lineage-specific biology revealed by a finished genome assembly of the mouse.</title>
        <authorList>
            <person name="Church D.M."/>
            <person name="Goodstadt L."/>
            <person name="Hillier L.W."/>
            <person name="Zody M.C."/>
            <person name="Goldstein S."/>
            <person name="She X."/>
            <person name="Bult C.J."/>
            <person name="Agarwala R."/>
            <person name="Cherry J.L."/>
            <person name="DiCuccio M."/>
            <person name="Hlavina W."/>
            <person name="Kapustin Y."/>
            <person name="Meric P."/>
            <person name="Maglott D."/>
            <person name="Birtle Z."/>
            <person name="Marques A.C."/>
            <person name="Graves T."/>
            <person name="Zhou S."/>
            <person name="Teague B."/>
            <person name="Potamousis K."/>
            <person name="Churas C."/>
            <person name="Place M."/>
            <person name="Herschleb J."/>
            <person name="Runnheim R."/>
            <person name="Forrest D."/>
            <person name="Amos-Landgraf J."/>
            <person name="Schwartz D.C."/>
            <person name="Cheng Z."/>
            <person name="Lindblad-Toh K."/>
            <person name="Eichler E.E."/>
            <person name="Ponting C.P."/>
        </authorList>
    </citation>
    <scope>NUCLEOTIDE SEQUENCE [LARGE SCALE GENOMIC DNA]</scope>
    <source>
        <strain>C57BL/6J</strain>
    </source>
</reference>
<reference key="5">
    <citation type="journal article" date="2004" name="Genome Res.">
        <title>The status, quality, and expansion of the NIH full-length cDNA project: the Mammalian Gene Collection (MGC).</title>
        <authorList>
            <consortium name="The MGC Project Team"/>
        </authorList>
    </citation>
    <scope>NUCLEOTIDE SEQUENCE [LARGE SCALE MRNA] (ISOFORM 1)</scope>
    <source>
        <tissue>Brain</tissue>
    </source>
</reference>
<reference key="6">
    <citation type="journal article" date="2003" name="J. Biol. Chem.">
        <title>T cell receptor engagement leads to the recruitment of IBP, a novel guanine nucleotide exchange factor, to the immunological synapse.</title>
        <authorList>
            <person name="Gupta S."/>
            <person name="Fanzo J.C."/>
            <person name="Hu C."/>
            <person name="Cox D."/>
            <person name="Jang S.Y."/>
            <person name="Lee A.E."/>
            <person name="Greenberg S."/>
            <person name="Pernis A.B."/>
        </authorList>
    </citation>
    <scope>FUNCTION</scope>
    <scope>DISEASE</scope>
</reference>
<reference key="7">
    <citation type="journal article" date="2010" name="Cell">
        <title>A tissue-specific atlas of mouse protein phosphorylation and expression.</title>
        <authorList>
            <person name="Huttlin E.L."/>
            <person name="Jedrychowski M.P."/>
            <person name="Elias J.E."/>
            <person name="Goswami T."/>
            <person name="Rad R."/>
            <person name="Beausoleil S.A."/>
            <person name="Villen J."/>
            <person name="Haas W."/>
            <person name="Sowa M.E."/>
            <person name="Gygi S.P."/>
        </authorList>
    </citation>
    <scope>IDENTIFICATION BY MASS SPECTROMETRY [LARGE SCALE ANALYSIS]</scope>
    <source>
        <tissue>Spleen</tissue>
    </source>
</reference>
<protein>
    <recommendedName>
        <fullName>Differentially expressed in FDCP 6</fullName>
        <shortName>DEF-6</shortName>
    </recommendedName>
    <alternativeName>
        <fullName>IRF4-binding protein</fullName>
    </alternativeName>
    <alternativeName>
        <fullName>SWAP-70-like adapter of T-cells</fullName>
    </alternativeName>
</protein>
<proteinExistence type="evidence at protein level"/>
<accession>Q8C2K1</accession>
<accession>A1KXF9</accession>
<accession>B2KF17</accession>
<accession>Q0VBU6</accession>
<accession>Q3V3M7</accession>
<accession>Q80XA9</accession>
<accession>Q9CRJ2</accession>
<organism>
    <name type="scientific">Mus musculus</name>
    <name type="common">Mouse</name>
    <dbReference type="NCBI Taxonomy" id="10090"/>
    <lineage>
        <taxon>Eukaryota</taxon>
        <taxon>Metazoa</taxon>
        <taxon>Chordata</taxon>
        <taxon>Craniata</taxon>
        <taxon>Vertebrata</taxon>
        <taxon>Euteleostomi</taxon>
        <taxon>Mammalia</taxon>
        <taxon>Eutheria</taxon>
        <taxon>Euarchontoglires</taxon>
        <taxon>Glires</taxon>
        <taxon>Rodentia</taxon>
        <taxon>Myomorpha</taxon>
        <taxon>Muroidea</taxon>
        <taxon>Muridae</taxon>
        <taxon>Murinae</taxon>
        <taxon>Mus</taxon>
        <taxon>Mus</taxon>
    </lineage>
</organism>